<sequence length="171" mass="18655">MTNFTFDGAHSSLEFQIKHLMVSKVKGSFDQFDVAVEGDINDFSTLKATATIIPSSINTKNEARDNHLKSGDFFGTDEFDKITFVTKSVSESKVVGDLTIKGITNEETFDVEFNGVSKNPMDGSQVTGIIVTGTINREKYGINFNQALETGGVMLGKDVKFEASAEFSISE</sequence>
<accession>Q5HCL0</accession>
<comment type="similarity">
    <text evidence="1">Belongs to the UPF0312 family.</text>
</comment>
<name>Y2711_STAAC</name>
<dbReference type="EMBL" id="CP000046">
    <property type="protein sequence ID" value="AAW37359.1"/>
    <property type="molecule type" value="Genomic_DNA"/>
</dbReference>
<dbReference type="RefSeq" id="WP_000181129.1">
    <property type="nucleotide sequence ID" value="NZ_JBGOFO010000001.1"/>
</dbReference>
<dbReference type="SMR" id="Q5HCL0"/>
<dbReference type="KEGG" id="sac:SACOL2711"/>
<dbReference type="HOGENOM" id="CLU_071003_3_0_9"/>
<dbReference type="Proteomes" id="UP000000530">
    <property type="component" value="Chromosome"/>
</dbReference>
<dbReference type="Gene3D" id="2.40.128.110">
    <property type="entry name" value="Lipid/polyisoprenoid-binding, YceI-like"/>
    <property type="match status" value="1"/>
</dbReference>
<dbReference type="InterPro" id="IPR007372">
    <property type="entry name" value="Lipid/polyisoprenoid-bd_YceI"/>
</dbReference>
<dbReference type="InterPro" id="IPR036761">
    <property type="entry name" value="TTHA0802/YceI-like_sf"/>
</dbReference>
<dbReference type="PANTHER" id="PTHR34406">
    <property type="entry name" value="PROTEIN YCEI"/>
    <property type="match status" value="1"/>
</dbReference>
<dbReference type="PANTHER" id="PTHR34406:SF1">
    <property type="entry name" value="PROTEIN YCEI"/>
    <property type="match status" value="1"/>
</dbReference>
<dbReference type="Pfam" id="PF04264">
    <property type="entry name" value="YceI"/>
    <property type="match status" value="1"/>
</dbReference>
<dbReference type="SMART" id="SM00867">
    <property type="entry name" value="YceI"/>
    <property type="match status" value="1"/>
</dbReference>
<dbReference type="SUPFAM" id="SSF101874">
    <property type="entry name" value="YceI-like"/>
    <property type="match status" value="1"/>
</dbReference>
<evidence type="ECO:0000305" key="1"/>
<organism>
    <name type="scientific">Staphylococcus aureus (strain COL)</name>
    <dbReference type="NCBI Taxonomy" id="93062"/>
    <lineage>
        <taxon>Bacteria</taxon>
        <taxon>Bacillati</taxon>
        <taxon>Bacillota</taxon>
        <taxon>Bacilli</taxon>
        <taxon>Bacillales</taxon>
        <taxon>Staphylococcaceae</taxon>
        <taxon>Staphylococcus</taxon>
    </lineage>
</organism>
<protein>
    <recommendedName>
        <fullName>UPF0312 protein SACOL2711</fullName>
    </recommendedName>
</protein>
<feature type="chain" id="PRO_0000299508" description="UPF0312 protein SACOL2711">
    <location>
        <begin position="1"/>
        <end position="171"/>
    </location>
</feature>
<proteinExistence type="inferred from homology"/>
<reference key="1">
    <citation type="journal article" date="2005" name="J. Bacteriol.">
        <title>Insights on evolution of virulence and resistance from the complete genome analysis of an early methicillin-resistant Staphylococcus aureus strain and a biofilm-producing methicillin-resistant Staphylococcus epidermidis strain.</title>
        <authorList>
            <person name="Gill S.R."/>
            <person name="Fouts D.E."/>
            <person name="Archer G.L."/>
            <person name="Mongodin E.F."/>
            <person name="DeBoy R.T."/>
            <person name="Ravel J."/>
            <person name="Paulsen I.T."/>
            <person name="Kolonay J.F."/>
            <person name="Brinkac L.M."/>
            <person name="Beanan M.J."/>
            <person name="Dodson R.J."/>
            <person name="Daugherty S.C."/>
            <person name="Madupu R."/>
            <person name="Angiuoli S.V."/>
            <person name="Durkin A.S."/>
            <person name="Haft D.H."/>
            <person name="Vamathevan J.J."/>
            <person name="Khouri H."/>
            <person name="Utterback T.R."/>
            <person name="Lee C."/>
            <person name="Dimitrov G."/>
            <person name="Jiang L."/>
            <person name="Qin H."/>
            <person name="Weidman J."/>
            <person name="Tran K."/>
            <person name="Kang K.H."/>
            <person name="Hance I.R."/>
            <person name="Nelson K.E."/>
            <person name="Fraser C.M."/>
        </authorList>
    </citation>
    <scope>NUCLEOTIDE SEQUENCE [LARGE SCALE GENOMIC DNA]</scope>
    <source>
        <strain>COL</strain>
    </source>
</reference>
<gene>
    <name type="ordered locus">SACOL2711</name>
</gene>